<dbReference type="EMBL" id="CP001175">
    <property type="protein sequence ID" value="ACK38490.1"/>
    <property type="molecule type" value="Genomic_DNA"/>
</dbReference>
<dbReference type="RefSeq" id="WP_003722604.1">
    <property type="nucleotide sequence ID" value="NC_011660.1"/>
</dbReference>
<dbReference type="SMR" id="B8DBN9"/>
<dbReference type="KEGG" id="lmh:LMHCC_0128"/>
<dbReference type="HOGENOM" id="CLU_053282_0_0_9"/>
<dbReference type="GO" id="GO:0003677">
    <property type="term" value="F:DNA binding"/>
    <property type="evidence" value="ECO:0007669"/>
    <property type="project" value="UniProtKB-UniRule"/>
</dbReference>
<dbReference type="GO" id="GO:0051301">
    <property type="term" value="P:cell division"/>
    <property type="evidence" value="ECO:0007669"/>
    <property type="project" value="UniProtKB-UniRule"/>
</dbReference>
<dbReference type="GO" id="GO:0043937">
    <property type="term" value="P:regulation of sporulation"/>
    <property type="evidence" value="ECO:0007669"/>
    <property type="project" value="InterPro"/>
</dbReference>
<dbReference type="FunFam" id="3.10.28.10:FF:000002">
    <property type="entry name" value="Probable cell division protein WhiA"/>
    <property type="match status" value="1"/>
</dbReference>
<dbReference type="Gene3D" id="3.10.28.10">
    <property type="entry name" value="Homing endonucleases"/>
    <property type="match status" value="1"/>
</dbReference>
<dbReference type="HAMAP" id="MF_01420">
    <property type="entry name" value="HTH_type_WhiA"/>
    <property type="match status" value="1"/>
</dbReference>
<dbReference type="InterPro" id="IPR027434">
    <property type="entry name" value="Homing_endonucl"/>
</dbReference>
<dbReference type="InterPro" id="IPR018478">
    <property type="entry name" value="Sporu_reg_WhiA_N_dom"/>
</dbReference>
<dbReference type="InterPro" id="IPR003802">
    <property type="entry name" value="Sporulation_regulator_WhiA"/>
</dbReference>
<dbReference type="InterPro" id="IPR023054">
    <property type="entry name" value="Sporulation_regulator_WhiA_C"/>
</dbReference>
<dbReference type="InterPro" id="IPR039518">
    <property type="entry name" value="WhiA_LAGLIDADG_dom"/>
</dbReference>
<dbReference type="NCBIfam" id="TIGR00647">
    <property type="entry name" value="DNA_bind_WhiA"/>
    <property type="match status" value="1"/>
</dbReference>
<dbReference type="PANTHER" id="PTHR37307">
    <property type="entry name" value="CELL DIVISION PROTEIN WHIA-RELATED"/>
    <property type="match status" value="1"/>
</dbReference>
<dbReference type="PANTHER" id="PTHR37307:SF1">
    <property type="entry name" value="CELL DIVISION PROTEIN WHIA-RELATED"/>
    <property type="match status" value="1"/>
</dbReference>
<dbReference type="Pfam" id="PF02650">
    <property type="entry name" value="HTH_WhiA"/>
    <property type="match status" value="1"/>
</dbReference>
<dbReference type="Pfam" id="PF14527">
    <property type="entry name" value="LAGLIDADG_WhiA"/>
    <property type="match status" value="1"/>
</dbReference>
<dbReference type="Pfam" id="PF10298">
    <property type="entry name" value="WhiA_N"/>
    <property type="match status" value="1"/>
</dbReference>
<dbReference type="SUPFAM" id="SSF55608">
    <property type="entry name" value="Homing endonucleases"/>
    <property type="match status" value="1"/>
</dbReference>
<organism>
    <name type="scientific">Listeria monocytogenes serotype 4a (strain HCC23)</name>
    <dbReference type="NCBI Taxonomy" id="552536"/>
    <lineage>
        <taxon>Bacteria</taxon>
        <taxon>Bacillati</taxon>
        <taxon>Bacillota</taxon>
        <taxon>Bacilli</taxon>
        <taxon>Bacillales</taxon>
        <taxon>Listeriaceae</taxon>
        <taxon>Listeria</taxon>
    </lineage>
</organism>
<comment type="function">
    <text evidence="1">Involved in cell division and chromosome segregation.</text>
</comment>
<comment type="similarity">
    <text evidence="1">Belongs to the WhiA family.</text>
</comment>
<evidence type="ECO:0000255" key="1">
    <source>
        <dbReference type="HAMAP-Rule" id="MF_01420"/>
    </source>
</evidence>
<proteinExistence type="inferred from homology"/>
<keyword id="KW-0131">Cell cycle</keyword>
<keyword id="KW-0132">Cell division</keyword>
<keyword id="KW-0238">DNA-binding</keyword>
<sequence length="323" mass="36572">MSFASETKKELTHMDVSDSDAKVELAAFIRMNGAISFSSQLVIMDVQTENAAIARRMYQLLKDLYEVPIELLVRRKMKLKKNNVYIVRLKSGTRGILEDLRILEPPMTFTKSIDRGFVKKRSAKRAYLRGAFLASGSVNNPETSSYHLEIFSVYEEHNEAICALMNQFDLNARTLERKNGFITYLKEAEKITEFLSIIGATSALLHFEDVRIMRDMRNSVNRLVNCETANLNKTINAAVRQIDNIKYIQSTVGLEALPERLREIAALRIANEDVTLKELGEMLTTGQVSKSGINHRLRKLDQIAERLRSGETPAQVGLKISNS</sequence>
<feature type="chain" id="PRO_0000376516" description="Probable cell division protein WhiA">
    <location>
        <begin position="1"/>
        <end position="323"/>
    </location>
</feature>
<feature type="DNA-binding region" description="H-T-H motif" evidence="1">
    <location>
        <begin position="275"/>
        <end position="309"/>
    </location>
</feature>
<name>WHIA_LISMH</name>
<reference key="1">
    <citation type="journal article" date="2011" name="J. Bacteriol.">
        <title>Genome sequence of lineage III Listeria monocytogenes strain HCC23.</title>
        <authorList>
            <person name="Steele C.L."/>
            <person name="Donaldson J.R."/>
            <person name="Paul D."/>
            <person name="Banes M.M."/>
            <person name="Arick T."/>
            <person name="Bridges S.M."/>
            <person name="Lawrence M.L."/>
        </authorList>
    </citation>
    <scope>NUCLEOTIDE SEQUENCE [LARGE SCALE GENOMIC DNA]</scope>
    <source>
        <strain>HCC23</strain>
    </source>
</reference>
<gene>
    <name evidence="1" type="primary">whiA</name>
    <name type="ordered locus">LMHCC_0128</name>
</gene>
<protein>
    <recommendedName>
        <fullName evidence="1">Probable cell division protein WhiA</fullName>
    </recommendedName>
</protein>
<accession>B8DBN9</accession>